<evidence type="ECO:0000250" key="1"/>
<evidence type="ECO:0000255" key="2"/>
<evidence type="ECO:0000256" key="3">
    <source>
        <dbReference type="SAM" id="MobiDB-lite"/>
    </source>
</evidence>
<evidence type="ECO:0000305" key="4"/>
<dbReference type="EMBL" id="CM000127">
    <property type="protein sequence ID" value="EEC73323.1"/>
    <property type="molecule type" value="Genomic_DNA"/>
</dbReference>
<dbReference type="SMR" id="B8AJ09"/>
<dbReference type="STRING" id="39946.B8AJ09"/>
<dbReference type="EnsemblPlants" id="BGIOSGA008354-TA">
    <property type="protein sequence ID" value="BGIOSGA008354-PA"/>
    <property type="gene ID" value="BGIOSGA008354"/>
</dbReference>
<dbReference type="EnsemblPlants" id="OsKYG_02g0019560.01">
    <property type="protein sequence ID" value="OsKYG_02g0019560.01"/>
    <property type="gene ID" value="OsKYG_02g0019560"/>
</dbReference>
<dbReference type="EnsemblPlants" id="OsLiXu_02g0019700.03">
    <property type="protein sequence ID" value="OsLiXu_02g0019700.03"/>
    <property type="gene ID" value="OsLiXu_02g0019700"/>
</dbReference>
<dbReference type="EnsemblPlants" id="OsMH63_02G019960_03">
    <property type="protein sequence ID" value="OsMH63_02G019960_03"/>
    <property type="gene ID" value="OsMH63_02G019960"/>
</dbReference>
<dbReference type="EnsemblPlants" id="OsPr106_02g0019580.02">
    <property type="protein sequence ID" value="OsPr106_02g0019580.02"/>
    <property type="gene ID" value="OsPr106_02g0019580"/>
</dbReference>
<dbReference type="Gramene" id="BGIOSGA008354-TA">
    <property type="protein sequence ID" value="BGIOSGA008354-PA"/>
    <property type="gene ID" value="BGIOSGA008354"/>
</dbReference>
<dbReference type="Gramene" id="OsKYG_02g0019560.01">
    <property type="protein sequence ID" value="OsKYG_02g0019560.01"/>
    <property type="gene ID" value="OsKYG_02g0019560"/>
</dbReference>
<dbReference type="Gramene" id="OsLiXu_02g0019700.03">
    <property type="protein sequence ID" value="OsLiXu_02g0019700.03"/>
    <property type="gene ID" value="OsLiXu_02g0019700"/>
</dbReference>
<dbReference type="Gramene" id="OsMH63_02G019960_03">
    <property type="protein sequence ID" value="OsMH63_02G019960_03"/>
    <property type="gene ID" value="OsMH63_02G019960"/>
</dbReference>
<dbReference type="Gramene" id="OsPr106_02g0019580.02">
    <property type="protein sequence ID" value="OsPr106_02g0019580.02"/>
    <property type="gene ID" value="OsPr106_02g0019580"/>
</dbReference>
<dbReference type="HOGENOM" id="CLU_033952_0_1_1"/>
<dbReference type="OMA" id="LPIMIYH"/>
<dbReference type="Proteomes" id="UP000007015">
    <property type="component" value="Chromosome 2"/>
</dbReference>
<dbReference type="GO" id="GO:0009941">
    <property type="term" value="C:chloroplast envelope"/>
    <property type="evidence" value="ECO:0007669"/>
    <property type="project" value="UniProtKB-SubCell"/>
</dbReference>
<dbReference type="GO" id="GO:0016020">
    <property type="term" value="C:membrane"/>
    <property type="evidence" value="ECO:0007669"/>
    <property type="project" value="UniProtKB-SubCell"/>
</dbReference>
<dbReference type="FunFam" id="1.20.1530.20:FF:000021">
    <property type="entry name" value="Probable sodium/metabolite cotransporter BASS4, chloroplastic"/>
    <property type="match status" value="1"/>
</dbReference>
<dbReference type="Gene3D" id="1.20.1530.20">
    <property type="match status" value="1"/>
</dbReference>
<dbReference type="InterPro" id="IPR038770">
    <property type="entry name" value="Na+/solute_symporter_sf"/>
</dbReference>
<dbReference type="InterPro" id="IPR016833">
    <property type="entry name" value="Put_Na-Bile_cotransptr"/>
</dbReference>
<dbReference type="PANTHER" id="PTHR18640:SF10">
    <property type="entry name" value="SODIUM_METABOLITE COTRANSPORTER BASS4, CHLOROPLASTIC-RELATED"/>
    <property type="match status" value="1"/>
</dbReference>
<dbReference type="PANTHER" id="PTHR18640">
    <property type="entry name" value="SOLUTE CARRIER FAMILY 10 MEMBER 7"/>
    <property type="match status" value="1"/>
</dbReference>
<dbReference type="Pfam" id="PF13593">
    <property type="entry name" value="SBF_like"/>
    <property type="match status" value="1"/>
</dbReference>
<keyword id="KW-0150">Chloroplast</keyword>
<keyword id="KW-0472">Membrane</keyword>
<keyword id="KW-0934">Plastid</keyword>
<keyword id="KW-1185">Reference proteome</keyword>
<keyword id="KW-0809">Transit peptide</keyword>
<keyword id="KW-0812">Transmembrane</keyword>
<keyword id="KW-1133">Transmembrane helix</keyword>
<keyword id="KW-0813">Transport</keyword>
<proteinExistence type="inferred from homology"/>
<gene>
    <name type="primary">BASS4</name>
    <name type="ORF">OsI_07515</name>
</gene>
<sequence>MVTTHHLCLLRSTVLSVPVRLRAPRAPPHPRLPTASASASSYHGPTHLRRLRPLRAAAAAAGGASPDGADGAKRPAPAAASSSLGAALVGFARSNFLPLALIAGIALALMDPTLGCLAHKYSLSKYSTFGIFLISGLTLRTKELGAALEAWPAGLFGLASILLFTPFLAQFIMQIKFFPHEFITGLAMFCCMPTTLSSGVTLTQLVGGNTALALAMTAISNLLGIMIVPLSLAKYIGVGAGVSLPTEKLFKSLVTTLLIPIILGKVARETSKGIAGFVDGNKQGFSVTSAILLSLVPWIQVSRSRSLLLSVQPKAFAVAVTVGVLLHFALLAFNAAALHILSRLEQRGVSVFARNEYARAVILVASQKTLPVLVAVVEQLGGALGESGLLVIPCVAAHINQIIIDSIIVNWWRQRDQQFANAK</sequence>
<organism>
    <name type="scientific">Oryza sativa subsp. indica</name>
    <name type="common">Rice</name>
    <dbReference type="NCBI Taxonomy" id="39946"/>
    <lineage>
        <taxon>Eukaryota</taxon>
        <taxon>Viridiplantae</taxon>
        <taxon>Streptophyta</taxon>
        <taxon>Embryophyta</taxon>
        <taxon>Tracheophyta</taxon>
        <taxon>Spermatophyta</taxon>
        <taxon>Magnoliopsida</taxon>
        <taxon>Liliopsida</taxon>
        <taxon>Poales</taxon>
        <taxon>Poaceae</taxon>
        <taxon>BOP clade</taxon>
        <taxon>Oryzoideae</taxon>
        <taxon>Oryzeae</taxon>
        <taxon>Oryzinae</taxon>
        <taxon>Oryza</taxon>
        <taxon>Oryza sativa</taxon>
    </lineage>
</organism>
<feature type="transit peptide" description="Chloroplast" evidence="2">
    <location>
        <begin position="1"/>
        <end position="55"/>
    </location>
</feature>
<feature type="chain" id="PRO_0000418612" description="Probable sodium/metabolite cotransporter BASS4, chloroplastic">
    <location>
        <begin position="56"/>
        <end position="423"/>
    </location>
</feature>
<feature type="transmembrane region" description="Helical" evidence="2">
    <location>
        <begin position="96"/>
        <end position="116"/>
    </location>
</feature>
<feature type="transmembrane region" description="Helical" evidence="2">
    <location>
        <begin position="123"/>
        <end position="140"/>
    </location>
</feature>
<feature type="transmembrane region" description="Helical" evidence="2">
    <location>
        <begin position="153"/>
        <end position="173"/>
    </location>
</feature>
<feature type="transmembrane region" description="Helical" evidence="2">
    <location>
        <begin position="182"/>
        <end position="202"/>
    </location>
</feature>
<feature type="transmembrane region" description="Helical" evidence="2">
    <location>
        <begin position="212"/>
        <end position="232"/>
    </location>
</feature>
<feature type="transmembrane region" description="Helical" evidence="2">
    <location>
        <begin position="244"/>
        <end position="264"/>
    </location>
</feature>
<feature type="transmembrane region" description="Helical" evidence="2">
    <location>
        <begin position="284"/>
        <end position="301"/>
    </location>
</feature>
<feature type="transmembrane region" description="Helical" evidence="2">
    <location>
        <begin position="315"/>
        <end position="335"/>
    </location>
</feature>
<feature type="transmembrane region" description="Helical" evidence="2">
    <location>
        <begin position="389"/>
        <end position="409"/>
    </location>
</feature>
<feature type="region of interest" description="Disordered" evidence="3">
    <location>
        <begin position="23"/>
        <end position="45"/>
    </location>
</feature>
<comment type="function">
    <text evidence="1">May function as sodium-coupled metabolite transporter across the chloroplast envelope.</text>
</comment>
<comment type="subcellular location">
    <subcellularLocation>
        <location evidence="4">Membrane</location>
        <topology evidence="4">Multi-pass membrane protein</topology>
    </subcellularLocation>
    <subcellularLocation>
        <location evidence="4">Plastid</location>
        <location evidence="4">Chloroplast envelope</location>
    </subcellularLocation>
</comment>
<comment type="similarity">
    <text evidence="4">Belongs to the bile acid:sodium symporter (BASS) (TC 2.A.28) family.</text>
</comment>
<reference key="1">
    <citation type="journal article" date="2005" name="PLoS Biol.">
        <title>The genomes of Oryza sativa: a history of duplications.</title>
        <authorList>
            <person name="Yu J."/>
            <person name="Wang J."/>
            <person name="Lin W."/>
            <person name="Li S."/>
            <person name="Li H."/>
            <person name="Zhou J."/>
            <person name="Ni P."/>
            <person name="Dong W."/>
            <person name="Hu S."/>
            <person name="Zeng C."/>
            <person name="Zhang J."/>
            <person name="Zhang Y."/>
            <person name="Li R."/>
            <person name="Xu Z."/>
            <person name="Li S."/>
            <person name="Li X."/>
            <person name="Zheng H."/>
            <person name="Cong L."/>
            <person name="Lin L."/>
            <person name="Yin J."/>
            <person name="Geng J."/>
            <person name="Li G."/>
            <person name="Shi J."/>
            <person name="Liu J."/>
            <person name="Lv H."/>
            <person name="Li J."/>
            <person name="Wang J."/>
            <person name="Deng Y."/>
            <person name="Ran L."/>
            <person name="Shi X."/>
            <person name="Wang X."/>
            <person name="Wu Q."/>
            <person name="Li C."/>
            <person name="Ren X."/>
            <person name="Wang J."/>
            <person name="Wang X."/>
            <person name="Li D."/>
            <person name="Liu D."/>
            <person name="Zhang X."/>
            <person name="Ji Z."/>
            <person name="Zhao W."/>
            <person name="Sun Y."/>
            <person name="Zhang Z."/>
            <person name="Bao J."/>
            <person name="Han Y."/>
            <person name="Dong L."/>
            <person name="Ji J."/>
            <person name="Chen P."/>
            <person name="Wu S."/>
            <person name="Liu J."/>
            <person name="Xiao Y."/>
            <person name="Bu D."/>
            <person name="Tan J."/>
            <person name="Yang L."/>
            <person name="Ye C."/>
            <person name="Zhang J."/>
            <person name="Xu J."/>
            <person name="Zhou Y."/>
            <person name="Yu Y."/>
            <person name="Zhang B."/>
            <person name="Zhuang S."/>
            <person name="Wei H."/>
            <person name="Liu B."/>
            <person name="Lei M."/>
            <person name="Yu H."/>
            <person name="Li Y."/>
            <person name="Xu H."/>
            <person name="Wei S."/>
            <person name="He X."/>
            <person name="Fang L."/>
            <person name="Zhang Z."/>
            <person name="Zhang Y."/>
            <person name="Huang X."/>
            <person name="Su Z."/>
            <person name="Tong W."/>
            <person name="Li J."/>
            <person name="Tong Z."/>
            <person name="Li S."/>
            <person name="Ye J."/>
            <person name="Wang L."/>
            <person name="Fang L."/>
            <person name="Lei T."/>
            <person name="Chen C.-S."/>
            <person name="Chen H.-C."/>
            <person name="Xu Z."/>
            <person name="Li H."/>
            <person name="Huang H."/>
            <person name="Zhang F."/>
            <person name="Xu H."/>
            <person name="Li N."/>
            <person name="Zhao C."/>
            <person name="Li S."/>
            <person name="Dong L."/>
            <person name="Huang Y."/>
            <person name="Li L."/>
            <person name="Xi Y."/>
            <person name="Qi Q."/>
            <person name="Li W."/>
            <person name="Zhang B."/>
            <person name="Hu W."/>
            <person name="Zhang Y."/>
            <person name="Tian X."/>
            <person name="Jiao Y."/>
            <person name="Liang X."/>
            <person name="Jin J."/>
            <person name="Gao L."/>
            <person name="Zheng W."/>
            <person name="Hao B."/>
            <person name="Liu S.-M."/>
            <person name="Wang W."/>
            <person name="Yuan L."/>
            <person name="Cao M."/>
            <person name="McDermott J."/>
            <person name="Samudrala R."/>
            <person name="Wang J."/>
            <person name="Wong G.K.-S."/>
            <person name="Yang H."/>
        </authorList>
    </citation>
    <scope>NUCLEOTIDE SEQUENCE [LARGE SCALE GENOMIC DNA]</scope>
    <source>
        <strain>cv. 93-11</strain>
    </source>
</reference>
<protein>
    <recommendedName>
        <fullName>Probable sodium/metabolite cotransporter BASS4, chloroplastic</fullName>
    </recommendedName>
    <alternativeName>
        <fullName>Bile acid-sodium symporter family protein 4</fullName>
    </alternativeName>
</protein>
<name>BASS4_ORYSI</name>
<accession>B8AJ09</accession>